<gene>
    <name evidence="1" type="primary">aaeA</name>
    <name type="ordered locus">ECS88_3617</name>
</gene>
<sequence length="310" mass="34761">MKTLIRKFSRTAITVVLVILAFIAIFNAWVYYTESPWTRDARFSADVVAIAPDVSGLITQVNVHDNQLVKKGQVLFTIDQPRYQKALEEAQADVAYYQVLAQEKRQEAGRRNRLGVQAMSREEIDQANNVLQTVLHQLAKAQATRDLAKLDLERTVIRAPADGWVTNLNVYTGEFITRGSTAVALVKQNSFYVLAYMEETKLEGVRPGYRAEITPLGSNKVLKGTVDSVAAGVTNASSTRDDKGMATIDSNLEWVRLAQRVPVRIRLDNQQENIWPAGTTATVVVTGKQDRDESQDSFFRKMAHRLREFG</sequence>
<reference key="1">
    <citation type="journal article" date="2009" name="PLoS Genet.">
        <title>Organised genome dynamics in the Escherichia coli species results in highly diverse adaptive paths.</title>
        <authorList>
            <person name="Touchon M."/>
            <person name="Hoede C."/>
            <person name="Tenaillon O."/>
            <person name="Barbe V."/>
            <person name="Baeriswyl S."/>
            <person name="Bidet P."/>
            <person name="Bingen E."/>
            <person name="Bonacorsi S."/>
            <person name="Bouchier C."/>
            <person name="Bouvet O."/>
            <person name="Calteau A."/>
            <person name="Chiapello H."/>
            <person name="Clermont O."/>
            <person name="Cruveiller S."/>
            <person name="Danchin A."/>
            <person name="Diard M."/>
            <person name="Dossat C."/>
            <person name="Karoui M.E."/>
            <person name="Frapy E."/>
            <person name="Garry L."/>
            <person name="Ghigo J.M."/>
            <person name="Gilles A.M."/>
            <person name="Johnson J."/>
            <person name="Le Bouguenec C."/>
            <person name="Lescat M."/>
            <person name="Mangenot S."/>
            <person name="Martinez-Jehanne V."/>
            <person name="Matic I."/>
            <person name="Nassif X."/>
            <person name="Oztas S."/>
            <person name="Petit M.A."/>
            <person name="Pichon C."/>
            <person name="Rouy Z."/>
            <person name="Ruf C.S."/>
            <person name="Schneider D."/>
            <person name="Tourret J."/>
            <person name="Vacherie B."/>
            <person name="Vallenet D."/>
            <person name="Medigue C."/>
            <person name="Rocha E.P.C."/>
            <person name="Denamur E."/>
        </authorList>
    </citation>
    <scope>NUCLEOTIDE SEQUENCE [LARGE SCALE GENOMIC DNA]</scope>
    <source>
        <strain>S88 / ExPEC</strain>
    </source>
</reference>
<name>AAEA_ECO45</name>
<feature type="chain" id="PRO_1000146711" description="p-hydroxybenzoic acid efflux pump subunit AaeA">
    <location>
        <begin position="1"/>
        <end position="310"/>
    </location>
</feature>
<feature type="transmembrane region" description="Helical" evidence="1">
    <location>
        <begin position="12"/>
        <end position="32"/>
    </location>
</feature>
<keyword id="KW-0997">Cell inner membrane</keyword>
<keyword id="KW-1003">Cell membrane</keyword>
<keyword id="KW-0472">Membrane</keyword>
<keyword id="KW-1185">Reference proteome</keyword>
<keyword id="KW-0812">Transmembrane</keyword>
<keyword id="KW-1133">Transmembrane helix</keyword>
<keyword id="KW-0813">Transport</keyword>
<proteinExistence type="inferred from homology"/>
<dbReference type="EMBL" id="CU928161">
    <property type="protein sequence ID" value="CAR04843.1"/>
    <property type="molecule type" value="Genomic_DNA"/>
</dbReference>
<dbReference type="RefSeq" id="WP_000854033.1">
    <property type="nucleotide sequence ID" value="NC_011742.1"/>
</dbReference>
<dbReference type="SMR" id="B7MC02"/>
<dbReference type="KEGG" id="ecz:ECS88_3617"/>
<dbReference type="HOGENOM" id="CLU_018816_15_2_6"/>
<dbReference type="Proteomes" id="UP000000747">
    <property type="component" value="Chromosome"/>
</dbReference>
<dbReference type="GO" id="GO:0005886">
    <property type="term" value="C:plasma membrane"/>
    <property type="evidence" value="ECO:0007669"/>
    <property type="project" value="UniProtKB-SubCell"/>
</dbReference>
<dbReference type="GO" id="GO:0022857">
    <property type="term" value="F:transmembrane transporter activity"/>
    <property type="evidence" value="ECO:0007669"/>
    <property type="project" value="UniProtKB-UniRule"/>
</dbReference>
<dbReference type="FunFam" id="2.40.30.170:FF:000002">
    <property type="entry name" value="p-hydroxybenzoic acid efflux pump subunit AaeA"/>
    <property type="match status" value="1"/>
</dbReference>
<dbReference type="FunFam" id="2.40.50.100:FF:000018">
    <property type="entry name" value="p-hydroxybenzoic acid efflux pump subunit AaeA"/>
    <property type="match status" value="1"/>
</dbReference>
<dbReference type="Gene3D" id="2.40.30.170">
    <property type="match status" value="1"/>
</dbReference>
<dbReference type="Gene3D" id="2.40.50.100">
    <property type="match status" value="1"/>
</dbReference>
<dbReference type="HAMAP" id="MF_01544">
    <property type="entry name" value="AaeA"/>
    <property type="match status" value="1"/>
</dbReference>
<dbReference type="InterPro" id="IPR043602">
    <property type="entry name" value="CusB-like_dom_1"/>
</dbReference>
<dbReference type="InterPro" id="IPR032317">
    <property type="entry name" value="CusB_D23"/>
</dbReference>
<dbReference type="InterPro" id="IPR050393">
    <property type="entry name" value="MFP_Efflux_Pump"/>
</dbReference>
<dbReference type="InterPro" id="IPR022871">
    <property type="entry name" value="PHBA_efflux_pump_AaeA"/>
</dbReference>
<dbReference type="InterPro" id="IPR006143">
    <property type="entry name" value="RND_pump_MFP"/>
</dbReference>
<dbReference type="NCBIfam" id="NF007850">
    <property type="entry name" value="PRK10559.1"/>
    <property type="match status" value="1"/>
</dbReference>
<dbReference type="NCBIfam" id="TIGR01730">
    <property type="entry name" value="RND_mfp"/>
    <property type="match status" value="1"/>
</dbReference>
<dbReference type="PANTHER" id="PTHR30367:SF12">
    <property type="entry name" value="P-HYDROXYBENZOIC ACID EFFLUX PUMP SUBUNIT AAEA"/>
    <property type="match status" value="1"/>
</dbReference>
<dbReference type="PANTHER" id="PTHR30367">
    <property type="entry name" value="P-HYDROXYBENZOIC ACID EFFLUX PUMP SUBUNIT AAEA-RELATED"/>
    <property type="match status" value="1"/>
</dbReference>
<dbReference type="Pfam" id="PF00529">
    <property type="entry name" value="CusB_dom_1"/>
    <property type="match status" value="1"/>
</dbReference>
<dbReference type="Pfam" id="PF16576">
    <property type="entry name" value="HlyD_D23"/>
    <property type="match status" value="1"/>
</dbReference>
<dbReference type="SUPFAM" id="SSF111369">
    <property type="entry name" value="HlyD-like secretion proteins"/>
    <property type="match status" value="1"/>
</dbReference>
<accession>B7MC02</accession>
<comment type="function">
    <text evidence="1">Forms an efflux pump with AaeB.</text>
</comment>
<comment type="subcellular location">
    <subcellularLocation>
        <location evidence="1">Cell inner membrane</location>
        <topology evidence="1">Single-pass membrane protein</topology>
    </subcellularLocation>
</comment>
<comment type="induction">
    <text evidence="1">Positively coregulated with aaeB and aaeX by AaeR.</text>
</comment>
<comment type="similarity">
    <text evidence="1">Belongs to the membrane fusion protein (MFP) (TC 8.A.1) family.</text>
</comment>
<evidence type="ECO:0000255" key="1">
    <source>
        <dbReference type="HAMAP-Rule" id="MF_01544"/>
    </source>
</evidence>
<protein>
    <recommendedName>
        <fullName evidence="1">p-hydroxybenzoic acid efflux pump subunit AaeA</fullName>
        <shortName evidence="1">pHBA efflux pump protein A</shortName>
    </recommendedName>
</protein>
<organism>
    <name type="scientific">Escherichia coli O45:K1 (strain S88 / ExPEC)</name>
    <dbReference type="NCBI Taxonomy" id="585035"/>
    <lineage>
        <taxon>Bacteria</taxon>
        <taxon>Pseudomonadati</taxon>
        <taxon>Pseudomonadota</taxon>
        <taxon>Gammaproteobacteria</taxon>
        <taxon>Enterobacterales</taxon>
        <taxon>Enterobacteriaceae</taxon>
        <taxon>Escherichia</taxon>
    </lineage>
</organism>